<accession>Q5R9C9</accession>
<reference key="1">
    <citation type="submission" date="2004-11" db="EMBL/GenBank/DDBJ databases">
        <authorList>
            <consortium name="The German cDNA consortium"/>
        </authorList>
    </citation>
    <scope>NUCLEOTIDE SEQUENCE [LARGE SCALE MRNA]</scope>
    <source>
        <tissue>Heart</tissue>
    </source>
</reference>
<feature type="chain" id="PRO_0000076594" description="Cyclic AMP-dependent transcription factor ATF-7">
    <location>
        <begin position="1"/>
        <end position="483"/>
    </location>
</feature>
<feature type="domain" description="bZIP" evidence="5">
    <location>
        <begin position="332"/>
        <end position="395"/>
    </location>
</feature>
<feature type="zinc finger region" description="C2H2-type" evidence="4">
    <location>
        <begin position="7"/>
        <end position="31"/>
    </location>
</feature>
<feature type="region of interest" description="Transactivation domain" evidence="1">
    <location>
        <begin position="1"/>
        <end position="285"/>
    </location>
</feature>
<feature type="region of interest" description="Disordered" evidence="6">
    <location>
        <begin position="110"/>
        <end position="148"/>
    </location>
</feature>
<feature type="region of interest" description="Disordered" evidence="6">
    <location>
        <begin position="299"/>
        <end position="345"/>
    </location>
</feature>
<feature type="region of interest" description="Basic motif" evidence="5">
    <location>
        <begin position="334"/>
        <end position="354"/>
    </location>
</feature>
<feature type="region of interest" description="Leucine-zipper" evidence="5">
    <location>
        <begin position="360"/>
        <end position="388"/>
    </location>
</feature>
<feature type="region of interest" description="Disordered" evidence="6">
    <location>
        <begin position="407"/>
        <end position="440"/>
    </location>
</feature>
<feature type="region of interest" description="Disordered" evidence="6">
    <location>
        <begin position="464"/>
        <end position="483"/>
    </location>
</feature>
<feature type="compositionally biased region" description="Low complexity" evidence="6">
    <location>
        <begin position="114"/>
        <end position="126"/>
    </location>
</feature>
<feature type="compositionally biased region" description="Low complexity" evidence="6">
    <location>
        <begin position="307"/>
        <end position="320"/>
    </location>
</feature>
<feature type="compositionally biased region" description="Basic and acidic residues" evidence="6">
    <location>
        <begin position="326"/>
        <end position="343"/>
    </location>
</feature>
<feature type="compositionally biased region" description="Polar residues" evidence="6">
    <location>
        <begin position="429"/>
        <end position="440"/>
    </location>
</feature>
<feature type="modified residue" description="Phosphothreonine; by MAPK11" evidence="2">
    <location>
        <position position="51"/>
    </location>
</feature>
<feature type="modified residue" description="Phosphothreonine" evidence="2">
    <location>
        <position position="53"/>
    </location>
</feature>
<feature type="modified residue" description="Phosphothreonine" evidence="2">
    <location>
        <position position="101"/>
    </location>
</feature>
<feature type="modified residue" description="Phosphoserine" evidence="2">
    <location>
        <position position="413"/>
    </location>
</feature>
<feature type="modified residue" description="Phosphoserine" evidence="2">
    <location>
        <position position="423"/>
    </location>
</feature>
<feature type="cross-link" description="Glycyl lysine isopeptide (Lys-Gly) (interchain with G-Cter in SUMO1)" evidence="2">
    <location>
        <position position="107"/>
    </location>
</feature>
<sequence>MGDDRPFVCNAPGCGQRFTNEDHLAVHKHKHEMTLKFGPARTDSVIIADQTPTPTRFLKNCEEVGLFNELASSFEHEFKKAADEDEKKAAAGPLDMSLPSTPDIKIKEEEPVEVDSSPPDSPASSPCSPPLKEKEVTPKPVLISTPTPTIVRPGSLPLHLGYDPLHPTLPSPTSVITQAPPSNRQMGSPTGSLPLVMHLANGQTMPVLPGPPVQMPSVISLARPVSMVPNIPGIPGPPVNSSGSISPSGHPIPSEAKMRLKATLTHQVSSINGGCGMVVGSASTMVTARPEQSQILIQHPDAPSPAQPQVSPAQPTPSTGGRRRRTVDEDPDERRQRFLERNRAAASRCRQKRKLWVSSLEKKAEELTSQNIQLSNEVTLLRNEVAQLKQLLLAHKDCPVTALQKKTQGYLESPKESSEPTGSPAPVIQHSSATAPSNGLSVRSAAEAVATSVLTQMASQRTELSMPIQSHVIMTPQSQSAGR</sequence>
<comment type="function">
    <text evidence="2 3">Stress-responsive chromatin regulator that plays a role in various biological processes including innate immunological memory, adipocyte differentiation or telomerase regulation (By similarity). In absence of stress, contributes to the formation of heterochromatin and heterochromatin-like structure by recruiting histone H3K9 tri- and di-methyltransferases thus silencing the transcription of target genes such as STAT1 in adipocytes, or genes involved in innate immunity in macrophages and adipocytes. Stress induces ATF7 phosphorylation that disrupts interactions with histone methyltransferase and enhances the association with coactivators containing histone acetyltransferase and/or histone demethylase, leading to disruption of the heterochromatin-like structure and subsequently transcriptional activation (By similarity). In response to TNF-alpha, which is induced by various stresses, phosphorylated ATF7 and telomerase are released from telomeres leading to telomere shortening (By similarity). Plays also a role in maintaining epithelial regenerative capacity and protecting against cell death during intestinal epithelial damage and repair (By similarity).</text>
</comment>
<comment type="subunit">
    <text evidence="2">Homodimer; binds DNA as homodimer. Heterodimer; heterodimerizes with other members of ATF family and with JUN family members. Interacts with JNK2; the interaction does not phosphorylate ATF7 but acts as a docking site for other ATF-associated partners such as JUN family members. Interacts (via its transactivation domain) with TAF12 (isoforms TAFII15 and TAFII20); the interaction potentiates the transactivation activity (isoform TAFII20 only) and is inhibited by ATF7 sumoylation. Interacts with TAF4; the interaction inhibits the TAF12-dependent transactivation. Interacts with MAPK9; the interaction does not phosphorylate ATF7 but acts as a docking site for ATF7-associated partners such as JUN. Interacts with Ku complex components XRCC6 and XRCC7. Interacts with TERT.</text>
</comment>
<comment type="subcellular location">
    <subcellularLocation>
        <location evidence="5">Nucleus</location>
    </subcellularLocation>
    <subcellularLocation>
        <location evidence="2">Nucleus</location>
        <location evidence="2">Nucleoplasm</location>
    </subcellularLocation>
    <subcellularLocation>
        <location evidence="2">Chromosome</location>
        <location evidence="2">Telomere</location>
    </subcellularLocation>
    <text evidence="2">Mainly nucleoplasmic. Restricted distribution to the perinuculear region. The sumoylated form locates to the nuclear peiphery.</text>
</comment>
<comment type="PTM">
    <text evidence="2 3">On EGF stimulation, phosphorylated first on Thr-53 allowing subsequent phosphorylation on Thr-51. This latter phosphorylation prevents sumoylation, increases binding to TAF12 and enhances transcriptional activity (By similarity). Social isolation stress as well as TNF-alpha also induce the phosphorylation of ATF7. Phosphorylated in proliferating colonic and small intestinal epithelial cells (By similarity).</text>
</comment>
<comment type="PTM">
    <text evidence="2">Sumoylation delays nuclear localization and inhibits transactivation activity through preventing binding to TAF12. RANBP2 appears to be the specific E3 ligase.</text>
</comment>
<comment type="similarity">
    <text evidence="7">Belongs to the bZIP family.</text>
</comment>
<protein>
    <recommendedName>
        <fullName>Cyclic AMP-dependent transcription factor ATF-7</fullName>
        <shortName>cAMP-dependent transcription factor ATF-7</shortName>
    </recommendedName>
    <alternativeName>
        <fullName>Activating transcription factor 7</fullName>
    </alternativeName>
    <alternativeName>
        <fullName>Transcription factor ATF-A</fullName>
    </alternativeName>
</protein>
<keyword id="KW-0010">Activator</keyword>
<keyword id="KW-0158">Chromosome</keyword>
<keyword id="KW-0238">DNA-binding</keyword>
<keyword id="KW-1017">Isopeptide bond</keyword>
<keyword id="KW-0479">Metal-binding</keyword>
<keyword id="KW-0539">Nucleus</keyword>
<keyword id="KW-0597">Phosphoprotein</keyword>
<keyword id="KW-1185">Reference proteome</keyword>
<keyword id="KW-0779">Telomere</keyword>
<keyword id="KW-0804">Transcription</keyword>
<keyword id="KW-0805">Transcription regulation</keyword>
<keyword id="KW-0832">Ubl conjugation</keyword>
<keyword id="KW-0862">Zinc</keyword>
<keyword id="KW-0863">Zinc-finger</keyword>
<proteinExistence type="evidence at transcript level"/>
<dbReference type="EMBL" id="CR859460">
    <property type="protein sequence ID" value="CAH91631.1"/>
    <property type="molecule type" value="mRNA"/>
</dbReference>
<dbReference type="RefSeq" id="NP_001125959.1">
    <property type="nucleotide sequence ID" value="NM_001132487.1"/>
</dbReference>
<dbReference type="RefSeq" id="XP_024111931.2">
    <property type="nucleotide sequence ID" value="XM_024256163.3"/>
</dbReference>
<dbReference type="SMR" id="Q5R9C9"/>
<dbReference type="FunCoup" id="Q5R9C9">
    <property type="interactions" value="3118"/>
</dbReference>
<dbReference type="STRING" id="9601.ENSPPYP00000005229"/>
<dbReference type="GeneID" id="100172894"/>
<dbReference type="KEGG" id="pon:100172894"/>
<dbReference type="CTD" id="11016"/>
<dbReference type="eggNOG" id="KOG1414">
    <property type="taxonomic scope" value="Eukaryota"/>
</dbReference>
<dbReference type="InParanoid" id="Q5R9C9"/>
<dbReference type="OrthoDB" id="295274at2759"/>
<dbReference type="Proteomes" id="UP000001595">
    <property type="component" value="Unplaced"/>
</dbReference>
<dbReference type="GO" id="GO:0000781">
    <property type="term" value="C:chromosome, telomeric region"/>
    <property type="evidence" value="ECO:0007669"/>
    <property type="project" value="UniProtKB-SubCell"/>
</dbReference>
<dbReference type="GO" id="GO:0005654">
    <property type="term" value="C:nucleoplasm"/>
    <property type="evidence" value="ECO:0000250"/>
    <property type="project" value="UniProtKB"/>
</dbReference>
<dbReference type="GO" id="GO:0003677">
    <property type="term" value="F:DNA binding"/>
    <property type="evidence" value="ECO:0007669"/>
    <property type="project" value="UniProtKB-KW"/>
</dbReference>
<dbReference type="GO" id="GO:0003700">
    <property type="term" value="F:DNA-binding transcription factor activity"/>
    <property type="evidence" value="ECO:0007669"/>
    <property type="project" value="InterPro"/>
</dbReference>
<dbReference type="GO" id="GO:0008270">
    <property type="term" value="F:zinc ion binding"/>
    <property type="evidence" value="ECO:0007669"/>
    <property type="project" value="UniProtKB-KW"/>
</dbReference>
<dbReference type="CDD" id="cd14687">
    <property type="entry name" value="bZIP_ATF2"/>
    <property type="match status" value="1"/>
</dbReference>
<dbReference type="CDD" id="cd12192">
    <property type="entry name" value="GCN4_cent"/>
    <property type="match status" value="1"/>
</dbReference>
<dbReference type="FunFam" id="1.20.5.170:FF:000010">
    <property type="entry name" value="Cyclic AMP-dependent transcription factor ATF-2"/>
    <property type="match status" value="1"/>
</dbReference>
<dbReference type="Gene3D" id="1.20.5.170">
    <property type="match status" value="1"/>
</dbReference>
<dbReference type="Gene3D" id="3.30.160.60">
    <property type="entry name" value="Classic Zinc Finger"/>
    <property type="match status" value="1"/>
</dbReference>
<dbReference type="InterPro" id="IPR004827">
    <property type="entry name" value="bZIP"/>
</dbReference>
<dbReference type="InterPro" id="IPR046347">
    <property type="entry name" value="bZIP_sf"/>
</dbReference>
<dbReference type="InterPro" id="IPR051027">
    <property type="entry name" value="bZIP_transcription_factors"/>
</dbReference>
<dbReference type="InterPro" id="IPR016378">
    <property type="entry name" value="TF_CRE-BP1-typ"/>
</dbReference>
<dbReference type="InterPro" id="IPR036236">
    <property type="entry name" value="Znf_C2H2_sf"/>
</dbReference>
<dbReference type="InterPro" id="IPR013087">
    <property type="entry name" value="Znf_C2H2_type"/>
</dbReference>
<dbReference type="PANTHER" id="PTHR19304">
    <property type="entry name" value="CYCLIC-AMP RESPONSE ELEMENT BINDING PROTEIN"/>
    <property type="match status" value="1"/>
</dbReference>
<dbReference type="Pfam" id="PF00170">
    <property type="entry name" value="bZIP_1"/>
    <property type="match status" value="1"/>
</dbReference>
<dbReference type="PIRSF" id="PIRSF003153">
    <property type="entry name" value="ATF2_CRE-BP1"/>
    <property type="match status" value="1"/>
</dbReference>
<dbReference type="SMART" id="SM00338">
    <property type="entry name" value="BRLZ"/>
    <property type="match status" value="1"/>
</dbReference>
<dbReference type="SMART" id="SM00355">
    <property type="entry name" value="ZnF_C2H2"/>
    <property type="match status" value="1"/>
</dbReference>
<dbReference type="SUPFAM" id="SSF57667">
    <property type="entry name" value="beta-beta-alpha zinc fingers"/>
    <property type="match status" value="1"/>
</dbReference>
<dbReference type="SUPFAM" id="SSF57959">
    <property type="entry name" value="Leucine zipper domain"/>
    <property type="match status" value="1"/>
</dbReference>
<dbReference type="PROSITE" id="PS50217">
    <property type="entry name" value="BZIP"/>
    <property type="match status" value="1"/>
</dbReference>
<dbReference type="PROSITE" id="PS00036">
    <property type="entry name" value="BZIP_BASIC"/>
    <property type="match status" value="1"/>
</dbReference>
<dbReference type="PROSITE" id="PS00028">
    <property type="entry name" value="ZINC_FINGER_C2H2_1"/>
    <property type="match status" value="1"/>
</dbReference>
<dbReference type="PROSITE" id="PS50157">
    <property type="entry name" value="ZINC_FINGER_C2H2_2"/>
    <property type="match status" value="1"/>
</dbReference>
<organism>
    <name type="scientific">Pongo abelii</name>
    <name type="common">Sumatran orangutan</name>
    <name type="synonym">Pongo pygmaeus abelii</name>
    <dbReference type="NCBI Taxonomy" id="9601"/>
    <lineage>
        <taxon>Eukaryota</taxon>
        <taxon>Metazoa</taxon>
        <taxon>Chordata</taxon>
        <taxon>Craniata</taxon>
        <taxon>Vertebrata</taxon>
        <taxon>Euteleostomi</taxon>
        <taxon>Mammalia</taxon>
        <taxon>Eutheria</taxon>
        <taxon>Euarchontoglires</taxon>
        <taxon>Primates</taxon>
        <taxon>Haplorrhini</taxon>
        <taxon>Catarrhini</taxon>
        <taxon>Hominidae</taxon>
        <taxon>Pongo</taxon>
    </lineage>
</organism>
<gene>
    <name type="primary">ATF7</name>
</gene>
<evidence type="ECO:0000250" key="1"/>
<evidence type="ECO:0000250" key="2">
    <source>
        <dbReference type="UniProtKB" id="P17544"/>
    </source>
</evidence>
<evidence type="ECO:0000250" key="3">
    <source>
        <dbReference type="UniProtKB" id="Q8R0S1"/>
    </source>
</evidence>
<evidence type="ECO:0000255" key="4">
    <source>
        <dbReference type="PROSITE-ProRule" id="PRU00042"/>
    </source>
</evidence>
<evidence type="ECO:0000255" key="5">
    <source>
        <dbReference type="PROSITE-ProRule" id="PRU00978"/>
    </source>
</evidence>
<evidence type="ECO:0000256" key="6">
    <source>
        <dbReference type="SAM" id="MobiDB-lite"/>
    </source>
</evidence>
<evidence type="ECO:0000305" key="7"/>
<name>ATF7_PONAB</name>